<dbReference type="EMBL" id="AF089825">
    <property type="protein sequence ID" value="AAC36741.1"/>
    <property type="molecule type" value="mRNA"/>
</dbReference>
<dbReference type="EMBL" id="AF140032">
    <property type="protein sequence ID" value="AAD30133.1"/>
    <property type="molecule type" value="mRNA"/>
</dbReference>
<dbReference type="RefSeq" id="NP_114003.2">
    <property type="nucleotide sequence ID" value="NM_031815.2"/>
</dbReference>
<dbReference type="SMR" id="O88959"/>
<dbReference type="FunCoup" id="O88959">
    <property type="interactions" value="251"/>
</dbReference>
<dbReference type="STRING" id="10116.ENSRNOP00000010106"/>
<dbReference type="GlyCosmos" id="O88959">
    <property type="glycosylation" value="1 site, No reported glycans"/>
</dbReference>
<dbReference type="GlyGen" id="O88959">
    <property type="glycosylation" value="1 site"/>
</dbReference>
<dbReference type="PhosphoSitePlus" id="O88959"/>
<dbReference type="PaxDb" id="10116-ENSRNOP00000010106"/>
<dbReference type="GeneID" id="83711"/>
<dbReference type="KEGG" id="rno:83711"/>
<dbReference type="UCSC" id="RGD:621196">
    <property type="organism name" value="rat"/>
</dbReference>
<dbReference type="AGR" id="RGD:621196"/>
<dbReference type="CTD" id="83729"/>
<dbReference type="RGD" id="621196">
    <property type="gene designation" value="Inhbe"/>
</dbReference>
<dbReference type="eggNOG" id="KOG3900">
    <property type="taxonomic scope" value="Eukaryota"/>
</dbReference>
<dbReference type="InParanoid" id="O88959"/>
<dbReference type="OrthoDB" id="6516235at2759"/>
<dbReference type="PhylomeDB" id="O88959"/>
<dbReference type="TreeFam" id="TF318514"/>
<dbReference type="Reactome" id="R-RNO-209822">
    <property type="pathway name" value="Glycoprotein hormones"/>
</dbReference>
<dbReference type="PRO" id="PR:O88959"/>
<dbReference type="Proteomes" id="UP000002494">
    <property type="component" value="Unplaced"/>
</dbReference>
<dbReference type="GO" id="GO:0005615">
    <property type="term" value="C:extracellular space"/>
    <property type="evidence" value="ECO:0000318"/>
    <property type="project" value="GO_Central"/>
</dbReference>
<dbReference type="GO" id="GO:0005125">
    <property type="term" value="F:cytokine activity"/>
    <property type="evidence" value="ECO:0000250"/>
    <property type="project" value="UniProtKB"/>
</dbReference>
<dbReference type="GO" id="GO:0008083">
    <property type="term" value="F:growth factor activity"/>
    <property type="evidence" value="ECO:0007669"/>
    <property type="project" value="UniProtKB-KW"/>
</dbReference>
<dbReference type="GO" id="GO:0005179">
    <property type="term" value="F:hormone activity"/>
    <property type="evidence" value="ECO:0007669"/>
    <property type="project" value="UniProtKB-KW"/>
</dbReference>
<dbReference type="GO" id="GO:1904178">
    <property type="term" value="P:negative regulation of adipose tissue development"/>
    <property type="evidence" value="ECO:0000250"/>
    <property type="project" value="UniProtKB"/>
</dbReference>
<dbReference type="CDD" id="cd19406">
    <property type="entry name" value="TGF_beta_INHBC_E"/>
    <property type="match status" value="1"/>
</dbReference>
<dbReference type="FunFam" id="2.10.90.10:FF:000005">
    <property type="entry name" value="Inhibin beta A chain"/>
    <property type="match status" value="1"/>
</dbReference>
<dbReference type="Gene3D" id="2.10.90.10">
    <property type="entry name" value="Cystine-knot cytokines"/>
    <property type="match status" value="1"/>
</dbReference>
<dbReference type="InterPro" id="IPR029034">
    <property type="entry name" value="Cystine-knot_cytokine"/>
</dbReference>
<dbReference type="InterPro" id="IPR001318">
    <property type="entry name" value="Inhibin_betaC"/>
</dbReference>
<dbReference type="InterPro" id="IPR001839">
    <property type="entry name" value="TGF-b_C"/>
</dbReference>
<dbReference type="InterPro" id="IPR015615">
    <property type="entry name" value="TGF-beta-rel"/>
</dbReference>
<dbReference type="InterPro" id="IPR017948">
    <property type="entry name" value="TGFb_CS"/>
</dbReference>
<dbReference type="PANTHER" id="PTHR11848:SF6">
    <property type="entry name" value="INHIBIN BETA E CHAIN"/>
    <property type="match status" value="1"/>
</dbReference>
<dbReference type="PANTHER" id="PTHR11848">
    <property type="entry name" value="TGF-BETA FAMILY"/>
    <property type="match status" value="1"/>
</dbReference>
<dbReference type="Pfam" id="PF00019">
    <property type="entry name" value="TGF_beta"/>
    <property type="match status" value="1"/>
</dbReference>
<dbReference type="PRINTS" id="PR00672">
    <property type="entry name" value="INHIBINBC"/>
</dbReference>
<dbReference type="SMART" id="SM00204">
    <property type="entry name" value="TGFB"/>
    <property type="match status" value="1"/>
</dbReference>
<dbReference type="SUPFAM" id="SSF57501">
    <property type="entry name" value="Cystine-knot cytokines"/>
    <property type="match status" value="1"/>
</dbReference>
<dbReference type="PROSITE" id="PS00250">
    <property type="entry name" value="TGF_BETA_1"/>
    <property type="match status" value="1"/>
</dbReference>
<dbReference type="PROSITE" id="PS51362">
    <property type="entry name" value="TGF_BETA_2"/>
    <property type="match status" value="1"/>
</dbReference>
<evidence type="ECO:0000250" key="1"/>
<evidence type="ECO:0000250" key="2">
    <source>
        <dbReference type="UniProtKB" id="O08717"/>
    </source>
</evidence>
<evidence type="ECO:0000250" key="3">
    <source>
        <dbReference type="UniProtKB" id="P58166"/>
    </source>
</evidence>
<evidence type="ECO:0000255" key="4"/>
<evidence type="ECO:0000305" key="5"/>
<organism>
    <name type="scientific">Rattus norvegicus</name>
    <name type="common">Rat</name>
    <dbReference type="NCBI Taxonomy" id="10116"/>
    <lineage>
        <taxon>Eukaryota</taxon>
        <taxon>Metazoa</taxon>
        <taxon>Chordata</taxon>
        <taxon>Craniata</taxon>
        <taxon>Vertebrata</taxon>
        <taxon>Euteleostomi</taxon>
        <taxon>Mammalia</taxon>
        <taxon>Eutheria</taxon>
        <taxon>Euarchontoglires</taxon>
        <taxon>Glires</taxon>
        <taxon>Rodentia</taxon>
        <taxon>Myomorpha</taxon>
        <taxon>Muroidea</taxon>
        <taxon>Muridae</taxon>
        <taxon>Murinae</taxon>
        <taxon>Rattus</taxon>
    </lineage>
</organism>
<sequence>MGLSNVQLWTILLWALAWVQSTRSACPSCGAPTLTPQGERALVLELAKQQILEGLHLTSRPRITRPLPQAALTRALRRLQPRSMVPGNREKVISFATSIDKSTSTYRSVLTFQLSPLWSHHLYHARLWLHVPPSFPATLYLRIFGCGTTRCRGSRTFLAEHQTTSSGWHALTLPSSGLRSEESGVTKLQLEFRPLDLNSTTARLPRLLLDTAGQQRPFLELKIRANEPGAGRARRRTPTCESETPLCCRRDHYVDFQELGWRDWILQPEGYQLNYCSGQCPPHLAGSPGIAASFHSAVFSLLKANNPWPAGSSCCVPTARRPLSLLYLDHNGNVVKTDVPDMVVEACGCS</sequence>
<proteinExistence type="evidence at transcript level"/>
<protein>
    <recommendedName>
        <fullName>Inhibin beta E chain</fullName>
    </recommendedName>
    <alternativeName>
        <fullName>Activin beta-E chain</fullName>
    </alternativeName>
</protein>
<reference key="1">
    <citation type="journal article" date="2000" name="J. Mol. Endocrinol.">
        <title>Cloning and regulation of the rat activin betaE subunit.</title>
        <authorList>
            <person name="O'Bryan M.K."/>
            <person name="Sebire K.L."/>
            <person name="Gerdprasert O."/>
            <person name="Hedger M.P."/>
            <person name="Hearn M.T.W."/>
            <person name="de Kretser D.M."/>
        </authorList>
    </citation>
    <scope>NUCLEOTIDE SEQUENCE [MRNA]</scope>
    <source>
        <strain>Sprague-Dawley</strain>
        <tissue>Liver</tissue>
        <tissue>Lung</tissue>
    </source>
</reference>
<reference key="2">
    <citation type="submission" date="1999-04" db="EMBL/GenBank/DDBJ databases">
        <title>Rat activin beta C and beta E: sequence and expression.</title>
        <authorList>
            <person name="Rossmanith W."/>
            <person name="Peter B."/>
            <person name="Schulte-Hermann R."/>
        </authorList>
    </citation>
    <scope>NUCLEOTIDE SEQUENCE [MRNA]</scope>
    <source>
        <strain>Wistar</strain>
    </source>
</reference>
<feature type="signal peptide" evidence="4">
    <location>
        <begin position="1"/>
        <end position="21"/>
    </location>
</feature>
<feature type="propeptide" id="PRO_0000033740" evidence="4">
    <location>
        <begin position="22"/>
        <end position="236"/>
    </location>
</feature>
<feature type="chain" id="PRO_0000033741" description="Inhibin beta E chain">
    <location>
        <begin position="237"/>
        <end position="350"/>
    </location>
</feature>
<feature type="glycosylation site" description="N-linked (GlcNAc...) asparagine" evidence="4">
    <location>
        <position position="198"/>
    </location>
</feature>
<feature type="disulfide bond" evidence="1">
    <location>
        <begin position="240"/>
        <end position="248"/>
    </location>
</feature>
<feature type="disulfide bond" evidence="1">
    <location>
        <begin position="247"/>
        <end position="315"/>
    </location>
</feature>
<feature type="disulfide bond" evidence="1">
    <location>
        <begin position="276"/>
        <end position="347"/>
    </location>
</feature>
<feature type="disulfide bond" evidence="1">
    <location>
        <begin position="280"/>
        <end position="349"/>
    </location>
</feature>
<feature type="disulfide bond" description="Interchain" evidence="1">
    <location>
        <position position="314"/>
    </location>
</feature>
<feature type="sequence conflict" description="In Ref. 2; AAD30133." evidence="5" ref="2">
    <original>EH</original>
    <variation>DY</variation>
    <location>
        <begin position="160"/>
        <end position="161"/>
    </location>
</feature>
<gene>
    <name type="primary">Inhbe</name>
</gene>
<keyword id="KW-0165">Cleavage on pair of basic residues</keyword>
<keyword id="KW-1015">Disulfide bond</keyword>
<keyword id="KW-0325">Glycoprotein</keyword>
<keyword id="KW-0339">Growth factor</keyword>
<keyword id="KW-0372">Hormone</keyword>
<keyword id="KW-1185">Reference proteome</keyword>
<keyword id="KW-0964">Secreted</keyword>
<keyword id="KW-0732">Signal</keyword>
<accession>O88959</accession>
<accession>Q9R285</accession>
<comment type="function">
    <text>Inhibins and activins inhibit and activate, respectively, the secretion of follitropin by the pituitary gland. Inhibins/activins are involved in regulating a number of diverse functions such as hypothalamic and pituitary hormone secretion, gonadal hormone secretion, germ cell development and maturation, erythroid differentiation, insulin secretion, nerve cell survival, embryonic axial development or bone growth, depending on their subunit composition. Inhibins appear to oppose the functions of activins.</text>
</comment>
<comment type="function">
    <text evidence="2 3">Activin E is a homodimer of INHBE secreted by the liver that plays a crucial role in regulating metabolic homeostasis particularly in lipid metabolism and energy homeostasis. Plays a central role in the regulation of adipose tissue lipolysis by preventing the influx of fatty acids from adipose tissue into the liver. Mechanistically, signals via ACVR1C to activate SMAD2/3 signaling, suppressing PPARG target genes in adipose tissue, thereby reducing liver lipid content and improving glycemic control. Induces beige adipocyte formation and thermogenesis in response to cold exposure.</text>
</comment>
<comment type="subunit">
    <text evidence="1">Homodimeric or heterodimeric through association with alpha and beta subunits, linked by one or more disulfide bonds. Inhibins are heterodimers of one alpha and one beta subunit. Activins are homo- or heterodimers of beta subunits only (By similarity).</text>
</comment>
<comment type="subcellular location">
    <subcellularLocation>
        <location evidence="1">Secreted</location>
    </subcellularLocation>
</comment>
<comment type="similarity">
    <text evidence="5">Belongs to the TGF-beta family.</text>
</comment>
<name>INHBE_RAT</name>